<organism>
    <name type="scientific">Metallosphaera sedula (strain ATCC 51363 / DSM 5348 / JCM 9185 / NBRC 15509 / TH2)</name>
    <dbReference type="NCBI Taxonomy" id="399549"/>
    <lineage>
        <taxon>Archaea</taxon>
        <taxon>Thermoproteota</taxon>
        <taxon>Thermoprotei</taxon>
        <taxon>Sulfolobales</taxon>
        <taxon>Sulfolobaceae</taxon>
        <taxon>Metallosphaera</taxon>
    </lineage>
</organism>
<comment type="similarity">
    <text evidence="1">Belongs to the eukaryotic ribosomal protein eL40 family.</text>
</comment>
<feature type="chain" id="PRO_1000072839" description="Large ribosomal subunit protein eL40">
    <location>
        <begin position="1"/>
        <end position="56"/>
    </location>
</feature>
<dbReference type="EMBL" id="CP000682">
    <property type="protein sequence ID" value="ABP94380.1"/>
    <property type="molecule type" value="Genomic_DNA"/>
</dbReference>
<dbReference type="SMR" id="A4YD78"/>
<dbReference type="STRING" id="399549.Msed_0203"/>
<dbReference type="KEGG" id="mse:Msed_0203"/>
<dbReference type="eggNOG" id="arCOG04049">
    <property type="taxonomic scope" value="Archaea"/>
</dbReference>
<dbReference type="HOGENOM" id="CLU_175093_1_0_2"/>
<dbReference type="Proteomes" id="UP000000242">
    <property type="component" value="Chromosome"/>
</dbReference>
<dbReference type="GO" id="GO:1990904">
    <property type="term" value="C:ribonucleoprotein complex"/>
    <property type="evidence" value="ECO:0007669"/>
    <property type="project" value="UniProtKB-KW"/>
</dbReference>
<dbReference type="GO" id="GO:0005840">
    <property type="term" value="C:ribosome"/>
    <property type="evidence" value="ECO:0007669"/>
    <property type="project" value="UniProtKB-KW"/>
</dbReference>
<dbReference type="GO" id="GO:0003735">
    <property type="term" value="F:structural constituent of ribosome"/>
    <property type="evidence" value="ECO:0007669"/>
    <property type="project" value="InterPro"/>
</dbReference>
<dbReference type="GO" id="GO:0006412">
    <property type="term" value="P:translation"/>
    <property type="evidence" value="ECO:0007669"/>
    <property type="project" value="UniProtKB-UniRule"/>
</dbReference>
<dbReference type="Gene3D" id="4.10.1060.50">
    <property type="match status" value="1"/>
</dbReference>
<dbReference type="HAMAP" id="MF_00788">
    <property type="entry name" value="Ribosomal_eL40"/>
    <property type="match status" value="1"/>
</dbReference>
<dbReference type="InterPro" id="IPR023657">
    <property type="entry name" value="Ribosomal_eL40_arc"/>
</dbReference>
<dbReference type="InterPro" id="IPR001975">
    <property type="entry name" value="Ribosomal_eL40_dom"/>
</dbReference>
<dbReference type="InterPro" id="IPR038587">
    <property type="entry name" value="Ribosomal_eL40_sf"/>
</dbReference>
<dbReference type="InterPro" id="IPR011332">
    <property type="entry name" value="Ribosomal_zn-bd"/>
</dbReference>
<dbReference type="NCBIfam" id="NF003161">
    <property type="entry name" value="PRK04136.1"/>
    <property type="match status" value="1"/>
</dbReference>
<dbReference type="PANTHER" id="PTHR39649">
    <property type="entry name" value="50S RIBOSOMAL PROTEIN L40E"/>
    <property type="match status" value="1"/>
</dbReference>
<dbReference type="PANTHER" id="PTHR39649:SF1">
    <property type="entry name" value="LARGE RIBOSOMAL SUBUNIT PROTEIN EL40"/>
    <property type="match status" value="1"/>
</dbReference>
<dbReference type="Pfam" id="PF01020">
    <property type="entry name" value="Ribosomal_L40e"/>
    <property type="match status" value="1"/>
</dbReference>
<dbReference type="SMART" id="SM01377">
    <property type="entry name" value="Ribosomal_L40e"/>
    <property type="match status" value="1"/>
</dbReference>
<dbReference type="SUPFAM" id="SSF57829">
    <property type="entry name" value="Zn-binding ribosomal proteins"/>
    <property type="match status" value="1"/>
</dbReference>
<sequence>MPLTDQAKIQIVQERVFIKKVCRNCGALNSIRATKCRRCHSTNLRPKKKELPTKRA</sequence>
<accession>A4YD78</accession>
<protein>
    <recommendedName>
        <fullName evidence="1">Large ribosomal subunit protein eL40</fullName>
    </recommendedName>
    <alternativeName>
        <fullName evidence="2">50S ribosomal protein L40e</fullName>
    </alternativeName>
</protein>
<evidence type="ECO:0000255" key="1">
    <source>
        <dbReference type="HAMAP-Rule" id="MF_00788"/>
    </source>
</evidence>
<evidence type="ECO:0000305" key="2"/>
<name>RL40_METS5</name>
<keyword id="KW-1185">Reference proteome</keyword>
<keyword id="KW-0687">Ribonucleoprotein</keyword>
<keyword id="KW-0689">Ribosomal protein</keyword>
<proteinExistence type="inferred from homology"/>
<gene>
    <name evidence="1" type="primary">rpl40e</name>
    <name type="ordered locus">Msed_0203</name>
</gene>
<reference key="1">
    <citation type="journal article" date="2008" name="Appl. Environ. Microbiol.">
        <title>The genome sequence of the metal-mobilizing, extremely thermoacidophilic archaeon Metallosphaera sedula provides insights into bioleaching-associated metabolism.</title>
        <authorList>
            <person name="Auernik K.S."/>
            <person name="Maezato Y."/>
            <person name="Blum P.H."/>
            <person name="Kelly R.M."/>
        </authorList>
    </citation>
    <scope>NUCLEOTIDE SEQUENCE [LARGE SCALE GENOMIC DNA]</scope>
    <source>
        <strain>ATCC 51363 / DSM 5348 / JCM 9185 / NBRC 15509 / TH2</strain>
    </source>
</reference>